<organism>
    <name type="scientific">Escherichia coli O81 (strain ED1a)</name>
    <dbReference type="NCBI Taxonomy" id="585397"/>
    <lineage>
        <taxon>Bacteria</taxon>
        <taxon>Pseudomonadati</taxon>
        <taxon>Pseudomonadota</taxon>
        <taxon>Gammaproteobacteria</taxon>
        <taxon>Enterobacterales</taxon>
        <taxon>Enterobacteriaceae</taxon>
        <taxon>Escherichia</taxon>
    </lineage>
</organism>
<dbReference type="EMBL" id="CU928162">
    <property type="protein sequence ID" value="CAR06913.1"/>
    <property type="molecule type" value="Genomic_DNA"/>
</dbReference>
<dbReference type="RefSeq" id="WP_001295307.1">
    <property type="nucleotide sequence ID" value="NC_011745.1"/>
</dbReference>
<dbReference type="SMR" id="B7MPN1"/>
<dbReference type="GeneID" id="93776744"/>
<dbReference type="KEGG" id="ecq:ECED1_0707"/>
<dbReference type="HOGENOM" id="CLU_047123_0_0_6"/>
<dbReference type="Proteomes" id="UP000000748">
    <property type="component" value="Chromosome"/>
</dbReference>
<dbReference type="GO" id="GO:0042597">
    <property type="term" value="C:periplasmic space"/>
    <property type="evidence" value="ECO:0007669"/>
    <property type="project" value="UniProtKB-SubCell"/>
</dbReference>
<dbReference type="GO" id="GO:0051301">
    <property type="term" value="P:cell division"/>
    <property type="evidence" value="ECO:0007669"/>
    <property type="project" value="UniProtKB-UniRule"/>
</dbReference>
<dbReference type="GO" id="GO:0017038">
    <property type="term" value="P:protein import"/>
    <property type="evidence" value="ECO:0007669"/>
    <property type="project" value="InterPro"/>
</dbReference>
<dbReference type="FunFam" id="2.120.10.30:FF:000022">
    <property type="entry name" value="Tol-Pal system protein TolB"/>
    <property type="match status" value="1"/>
</dbReference>
<dbReference type="FunFam" id="3.40.50.10070:FF:000001">
    <property type="entry name" value="Tol-Pal system protein TolB"/>
    <property type="match status" value="1"/>
</dbReference>
<dbReference type="Gene3D" id="2.120.10.30">
    <property type="entry name" value="TolB, C-terminal domain"/>
    <property type="match status" value="1"/>
</dbReference>
<dbReference type="Gene3D" id="3.40.50.10070">
    <property type="entry name" value="TolB, N-terminal domain"/>
    <property type="match status" value="1"/>
</dbReference>
<dbReference type="HAMAP" id="MF_00671">
    <property type="entry name" value="TolB"/>
    <property type="match status" value="1"/>
</dbReference>
<dbReference type="InterPro" id="IPR011042">
    <property type="entry name" value="6-blade_b-propeller_TolB-like"/>
</dbReference>
<dbReference type="InterPro" id="IPR011659">
    <property type="entry name" value="PD40"/>
</dbReference>
<dbReference type="InterPro" id="IPR014167">
    <property type="entry name" value="Tol-Pal_TolB"/>
</dbReference>
<dbReference type="InterPro" id="IPR007195">
    <property type="entry name" value="TolB_N"/>
</dbReference>
<dbReference type="NCBIfam" id="TIGR02800">
    <property type="entry name" value="propeller_TolB"/>
    <property type="match status" value="1"/>
</dbReference>
<dbReference type="PANTHER" id="PTHR36842:SF1">
    <property type="entry name" value="PROTEIN TOLB"/>
    <property type="match status" value="1"/>
</dbReference>
<dbReference type="PANTHER" id="PTHR36842">
    <property type="entry name" value="PROTEIN TOLB HOMOLOG"/>
    <property type="match status" value="1"/>
</dbReference>
<dbReference type="Pfam" id="PF07676">
    <property type="entry name" value="PD40"/>
    <property type="match status" value="4"/>
</dbReference>
<dbReference type="Pfam" id="PF04052">
    <property type="entry name" value="TolB_N"/>
    <property type="match status" value="1"/>
</dbReference>
<dbReference type="SUPFAM" id="SSF52964">
    <property type="entry name" value="TolB, N-terminal domain"/>
    <property type="match status" value="1"/>
</dbReference>
<dbReference type="SUPFAM" id="SSF69304">
    <property type="entry name" value="Tricorn protease N-terminal domain"/>
    <property type="match status" value="1"/>
</dbReference>
<proteinExistence type="inferred from homology"/>
<evidence type="ECO:0000255" key="1">
    <source>
        <dbReference type="HAMAP-Rule" id="MF_00671"/>
    </source>
</evidence>
<gene>
    <name evidence="1" type="primary">tolB</name>
    <name type="ordered locus">ECED1_0707</name>
</gene>
<accession>B7MPN1</accession>
<reference key="1">
    <citation type="journal article" date="2009" name="PLoS Genet.">
        <title>Organised genome dynamics in the Escherichia coli species results in highly diverse adaptive paths.</title>
        <authorList>
            <person name="Touchon M."/>
            <person name="Hoede C."/>
            <person name="Tenaillon O."/>
            <person name="Barbe V."/>
            <person name="Baeriswyl S."/>
            <person name="Bidet P."/>
            <person name="Bingen E."/>
            <person name="Bonacorsi S."/>
            <person name="Bouchier C."/>
            <person name="Bouvet O."/>
            <person name="Calteau A."/>
            <person name="Chiapello H."/>
            <person name="Clermont O."/>
            <person name="Cruveiller S."/>
            <person name="Danchin A."/>
            <person name="Diard M."/>
            <person name="Dossat C."/>
            <person name="Karoui M.E."/>
            <person name="Frapy E."/>
            <person name="Garry L."/>
            <person name="Ghigo J.M."/>
            <person name="Gilles A.M."/>
            <person name="Johnson J."/>
            <person name="Le Bouguenec C."/>
            <person name="Lescat M."/>
            <person name="Mangenot S."/>
            <person name="Martinez-Jehanne V."/>
            <person name="Matic I."/>
            <person name="Nassif X."/>
            <person name="Oztas S."/>
            <person name="Petit M.A."/>
            <person name="Pichon C."/>
            <person name="Rouy Z."/>
            <person name="Ruf C.S."/>
            <person name="Schneider D."/>
            <person name="Tourret J."/>
            <person name="Vacherie B."/>
            <person name="Vallenet D."/>
            <person name="Medigue C."/>
            <person name="Rocha E.P.C."/>
            <person name="Denamur E."/>
        </authorList>
    </citation>
    <scope>NUCLEOTIDE SEQUENCE [LARGE SCALE GENOMIC DNA]</scope>
    <source>
        <strain>ED1a</strain>
    </source>
</reference>
<feature type="signal peptide" evidence="1">
    <location>
        <begin position="1"/>
        <end position="21"/>
    </location>
</feature>
<feature type="chain" id="PRO_1000147663" description="Tol-Pal system protein TolB" evidence="1">
    <location>
        <begin position="22"/>
        <end position="430"/>
    </location>
</feature>
<name>TOLB_ECO81</name>
<keyword id="KW-0131">Cell cycle</keyword>
<keyword id="KW-0132">Cell division</keyword>
<keyword id="KW-0574">Periplasm</keyword>
<keyword id="KW-0732">Signal</keyword>
<sequence length="430" mass="45956">MKQALRVAFGFLILWASVLHAEVRIVIDSGVDSGRPIGVVPFQWAGPGAAPEDIGGIVAADLRNSGKFNPLDRARLPQQPGSAQEVQPAAWSALGIDAVVVGQVTPNPDGSYNVAYQLVDTGGAPGTVLAQNSYKVNKQWLRYAGHTASDEVFEKLTGIKGAFRTRIAYVVQTNGGQFPYELRVSDYDGYNQFVVHRSPQPLMSPAWSPDGSKLAYVTFESGRSALVIQTLANGAVRQVASFPRHNGAPAFSPDGSKLAFALSKTGSLNLYVMDLASGQIRQVTDGRSNNTEPTWFPDSQNLAFTSDQAGRPQVYKVNINGGAPQRITWEGSQNQDADVSSDGKFMVMVSSNGGQQHIAKQDLATGGVQVLSSTFLDETPSLAPNGTMVIYSSSQGMGSVLNLVSTDGRFKARLPATDGQVKFPAWSPYL</sequence>
<protein>
    <recommendedName>
        <fullName evidence="1">Tol-Pal system protein TolB</fullName>
    </recommendedName>
</protein>
<comment type="function">
    <text evidence="1">Part of the Tol-Pal system, which plays a role in outer membrane invagination during cell division and is important for maintaining outer membrane integrity. TolB occupies a key intermediary position in the Tol-Pal system because it communicates directly with both membrane-embedded components, Pal in the outer membrane and TolA in the inner membrane.</text>
</comment>
<comment type="subunit">
    <text evidence="1">The Tol-Pal system is composed of five core proteins: the inner membrane proteins TolA, TolQ and TolR, the periplasmic protein TolB and the outer membrane protein Pal. They form a network linking the inner and outer membranes and the peptidoglycan layer.</text>
</comment>
<comment type="subcellular location">
    <subcellularLocation>
        <location evidence="1">Periplasm</location>
    </subcellularLocation>
</comment>
<comment type="similarity">
    <text evidence="1">Belongs to the TolB family.</text>
</comment>